<evidence type="ECO:0000255" key="1">
    <source>
        <dbReference type="HAMAP-Rule" id="MF_00129"/>
    </source>
</evidence>
<protein>
    <recommendedName>
        <fullName evidence="1">tRNA uridine 5-carboxymethylaminomethyl modification enzyme MnmG</fullName>
    </recommendedName>
    <alternativeName>
        <fullName evidence="1">Glucose-inhibited division protein A</fullName>
    </alternativeName>
</protein>
<accession>A5U9Q7</accession>
<sequence>MFYTETYDVIVIGGGHAGTEAALAPARMGFKTLLLTHNVDTLGQMSCNPAIGGIGKGHLVKEVDAMGGLMAHAADKAGIQFRTLNSSKGPAVRATRAQADRVLYRQAVRTALENQPNLDIFQQEATDILIEQDRVTGVSTKMGLIFRAKSVVLTAGTFLAGKIHIGLENYEGGRAGDPASVNLSHRLRDLGLRVDRLKTGTPPRIDARTINFDILAKQHGDEVLPMFSFMGSVDDHPQQIPCYITYTNEQTHEVIRNNLDRSPMYTGVIEGIGPRYCPSIEDKVMRFSDRNSHQIYLEPEGLTSNEVYPNGISTSLPFDVQMGIVNSMKGLENARIVKPGYAIEYDYFDPRDLKPTLETKSISGLFFAGQINGTTGYEEAAAQGLLAGINAGLYVQEKDAWYPRRDQSYTGVLVDDLCTLGTKEPYRVFTSRAEYRLLLREDNADIRLTPIAHELGLIDDARWARFNQKMENIEQERQRLRNIWLHPRSEYLEEANKVLGSPLVREASGEDLLRRPEMTYDILTSLTPYKPAMEDKEAVEQVEIAIKYQGYIEHQQEEIEKQKRHENTAIPANFDYSKVSSLSNEVRAKLEQHRPVSISQASRISGITPAAISIILVNLKKQGMLKRGE</sequence>
<keyword id="KW-0963">Cytoplasm</keyword>
<keyword id="KW-0274">FAD</keyword>
<keyword id="KW-0285">Flavoprotein</keyword>
<keyword id="KW-0520">NAD</keyword>
<keyword id="KW-0819">tRNA processing</keyword>
<name>MNMG_HAEIE</name>
<gene>
    <name evidence="1" type="primary">mnmG</name>
    <name evidence="1" type="synonym">gidA</name>
    <name type="ordered locus">CGSHiEE_00050</name>
</gene>
<organism>
    <name type="scientific">Haemophilus influenzae (strain PittEE)</name>
    <dbReference type="NCBI Taxonomy" id="374930"/>
    <lineage>
        <taxon>Bacteria</taxon>
        <taxon>Pseudomonadati</taxon>
        <taxon>Pseudomonadota</taxon>
        <taxon>Gammaproteobacteria</taxon>
        <taxon>Pasteurellales</taxon>
        <taxon>Pasteurellaceae</taxon>
        <taxon>Haemophilus</taxon>
    </lineage>
</organism>
<reference key="1">
    <citation type="journal article" date="2007" name="Genome Biol.">
        <title>Characterization and modeling of the Haemophilus influenzae core and supragenomes based on the complete genomic sequences of Rd and 12 clinical nontypeable strains.</title>
        <authorList>
            <person name="Hogg J.S."/>
            <person name="Hu F.Z."/>
            <person name="Janto B."/>
            <person name="Boissy R."/>
            <person name="Hayes J."/>
            <person name="Keefe R."/>
            <person name="Post J.C."/>
            <person name="Ehrlich G.D."/>
        </authorList>
    </citation>
    <scope>NUCLEOTIDE SEQUENCE [LARGE SCALE GENOMIC DNA]</scope>
    <source>
        <strain>PittEE</strain>
    </source>
</reference>
<feature type="chain" id="PRO_1000016605" description="tRNA uridine 5-carboxymethylaminomethyl modification enzyme MnmG">
    <location>
        <begin position="1"/>
        <end position="629"/>
    </location>
</feature>
<feature type="binding site" evidence="1">
    <location>
        <begin position="13"/>
        <end position="18"/>
    </location>
    <ligand>
        <name>FAD</name>
        <dbReference type="ChEBI" id="CHEBI:57692"/>
    </ligand>
</feature>
<feature type="binding site" evidence="1">
    <location>
        <begin position="273"/>
        <end position="287"/>
    </location>
    <ligand>
        <name>NAD(+)</name>
        <dbReference type="ChEBI" id="CHEBI:57540"/>
    </ligand>
</feature>
<proteinExistence type="inferred from homology"/>
<dbReference type="EMBL" id="CP000671">
    <property type="protein sequence ID" value="ABQ97508.1"/>
    <property type="molecule type" value="Genomic_DNA"/>
</dbReference>
<dbReference type="SMR" id="A5U9Q7"/>
<dbReference type="KEGG" id="hip:CGSHiEE_00050"/>
<dbReference type="HOGENOM" id="CLU_007831_2_2_6"/>
<dbReference type="GO" id="GO:0005829">
    <property type="term" value="C:cytosol"/>
    <property type="evidence" value="ECO:0007669"/>
    <property type="project" value="TreeGrafter"/>
</dbReference>
<dbReference type="GO" id="GO:0050660">
    <property type="term" value="F:flavin adenine dinucleotide binding"/>
    <property type="evidence" value="ECO:0007669"/>
    <property type="project" value="UniProtKB-UniRule"/>
</dbReference>
<dbReference type="GO" id="GO:0030488">
    <property type="term" value="P:tRNA methylation"/>
    <property type="evidence" value="ECO:0007669"/>
    <property type="project" value="TreeGrafter"/>
</dbReference>
<dbReference type="GO" id="GO:0002098">
    <property type="term" value="P:tRNA wobble uridine modification"/>
    <property type="evidence" value="ECO:0007669"/>
    <property type="project" value="InterPro"/>
</dbReference>
<dbReference type="FunFam" id="1.10.10.1800:FF:000001">
    <property type="entry name" value="tRNA uridine 5-carboxymethylaminomethyl modification enzyme MnmG"/>
    <property type="match status" value="1"/>
</dbReference>
<dbReference type="FunFam" id="1.10.150.570:FF:000001">
    <property type="entry name" value="tRNA uridine 5-carboxymethylaminomethyl modification enzyme MnmG"/>
    <property type="match status" value="1"/>
</dbReference>
<dbReference type="FunFam" id="3.50.50.60:FF:000002">
    <property type="entry name" value="tRNA uridine 5-carboxymethylaminomethyl modification enzyme MnmG"/>
    <property type="match status" value="1"/>
</dbReference>
<dbReference type="FunFam" id="3.50.50.60:FF:000010">
    <property type="entry name" value="tRNA uridine 5-carboxymethylaminomethyl modification enzyme MnmG"/>
    <property type="match status" value="1"/>
</dbReference>
<dbReference type="Gene3D" id="3.50.50.60">
    <property type="entry name" value="FAD/NAD(P)-binding domain"/>
    <property type="match status" value="2"/>
</dbReference>
<dbReference type="Gene3D" id="1.10.150.570">
    <property type="entry name" value="GidA associated domain, C-terminal subdomain"/>
    <property type="match status" value="1"/>
</dbReference>
<dbReference type="Gene3D" id="1.10.10.1800">
    <property type="entry name" value="tRNA uridine 5-carboxymethylaminomethyl modification enzyme MnmG/GidA"/>
    <property type="match status" value="1"/>
</dbReference>
<dbReference type="HAMAP" id="MF_00129">
    <property type="entry name" value="MnmG_GidA"/>
    <property type="match status" value="1"/>
</dbReference>
<dbReference type="InterPro" id="IPR036188">
    <property type="entry name" value="FAD/NAD-bd_sf"/>
</dbReference>
<dbReference type="InterPro" id="IPR049312">
    <property type="entry name" value="GIDA_C_N"/>
</dbReference>
<dbReference type="InterPro" id="IPR004416">
    <property type="entry name" value="MnmG"/>
</dbReference>
<dbReference type="InterPro" id="IPR002218">
    <property type="entry name" value="MnmG-rel"/>
</dbReference>
<dbReference type="InterPro" id="IPR020595">
    <property type="entry name" value="MnmG-rel_CS"/>
</dbReference>
<dbReference type="InterPro" id="IPR026904">
    <property type="entry name" value="MnmG_C"/>
</dbReference>
<dbReference type="InterPro" id="IPR047001">
    <property type="entry name" value="MnmG_C_subdom"/>
</dbReference>
<dbReference type="InterPro" id="IPR044920">
    <property type="entry name" value="MnmG_C_subdom_sf"/>
</dbReference>
<dbReference type="InterPro" id="IPR040131">
    <property type="entry name" value="MnmG_N"/>
</dbReference>
<dbReference type="NCBIfam" id="TIGR00136">
    <property type="entry name" value="mnmG_gidA"/>
    <property type="match status" value="1"/>
</dbReference>
<dbReference type="PANTHER" id="PTHR11806">
    <property type="entry name" value="GLUCOSE INHIBITED DIVISION PROTEIN A"/>
    <property type="match status" value="1"/>
</dbReference>
<dbReference type="PANTHER" id="PTHR11806:SF0">
    <property type="entry name" value="PROTEIN MTO1 HOMOLOG, MITOCHONDRIAL"/>
    <property type="match status" value="1"/>
</dbReference>
<dbReference type="Pfam" id="PF01134">
    <property type="entry name" value="GIDA"/>
    <property type="match status" value="1"/>
</dbReference>
<dbReference type="Pfam" id="PF21680">
    <property type="entry name" value="GIDA_C_1st"/>
    <property type="match status" value="1"/>
</dbReference>
<dbReference type="Pfam" id="PF13932">
    <property type="entry name" value="SAM_GIDA_C"/>
    <property type="match status" value="1"/>
</dbReference>
<dbReference type="PRINTS" id="PR00411">
    <property type="entry name" value="PNDRDTASEI"/>
</dbReference>
<dbReference type="SMART" id="SM01228">
    <property type="entry name" value="GIDA_assoc_3"/>
    <property type="match status" value="1"/>
</dbReference>
<dbReference type="SUPFAM" id="SSF51905">
    <property type="entry name" value="FAD/NAD(P)-binding domain"/>
    <property type="match status" value="1"/>
</dbReference>
<dbReference type="PROSITE" id="PS01280">
    <property type="entry name" value="GIDA_1"/>
    <property type="match status" value="1"/>
</dbReference>
<dbReference type="PROSITE" id="PS01281">
    <property type="entry name" value="GIDA_2"/>
    <property type="match status" value="1"/>
</dbReference>
<comment type="function">
    <text evidence="1">NAD-binding protein involved in the addition of a carboxymethylaminomethyl (cmnm) group at the wobble position (U34) of certain tRNAs, forming tRNA-cmnm(5)s(2)U34.</text>
</comment>
<comment type="cofactor">
    <cofactor evidence="1">
        <name>FAD</name>
        <dbReference type="ChEBI" id="CHEBI:57692"/>
    </cofactor>
</comment>
<comment type="subunit">
    <text evidence="1">Homodimer. Heterotetramer of two MnmE and two MnmG subunits.</text>
</comment>
<comment type="subcellular location">
    <subcellularLocation>
        <location evidence="1">Cytoplasm</location>
    </subcellularLocation>
</comment>
<comment type="similarity">
    <text evidence="1">Belongs to the MnmG family.</text>
</comment>